<comment type="function">
    <text evidence="2">GTP hydrolase that promotes the GTP-dependent binding of aminoacyl-tRNA to the A-site of ribosomes during protein biosynthesis.</text>
</comment>
<comment type="catalytic activity">
    <reaction evidence="2">
        <text>GTP + H2O = GDP + phosphate + H(+)</text>
        <dbReference type="Rhea" id="RHEA:19669"/>
        <dbReference type="ChEBI" id="CHEBI:15377"/>
        <dbReference type="ChEBI" id="CHEBI:15378"/>
        <dbReference type="ChEBI" id="CHEBI:37565"/>
        <dbReference type="ChEBI" id="CHEBI:43474"/>
        <dbReference type="ChEBI" id="CHEBI:58189"/>
        <dbReference type="EC" id="3.6.5.3"/>
    </reaction>
    <physiologicalReaction direction="left-to-right" evidence="2">
        <dbReference type="Rhea" id="RHEA:19670"/>
    </physiologicalReaction>
</comment>
<comment type="subunit">
    <text evidence="2">Monomer.</text>
</comment>
<comment type="subcellular location">
    <subcellularLocation>
        <location evidence="2">Cytoplasm</location>
    </subcellularLocation>
</comment>
<comment type="similarity">
    <text evidence="2">Belongs to the TRAFAC class translation factor GTPase superfamily. Classic translation factor GTPase family. EF-Tu/EF-1A subfamily.</text>
</comment>
<proteinExistence type="inferred from homology"/>
<evidence type="ECO:0000250" key="1"/>
<evidence type="ECO:0000255" key="2">
    <source>
        <dbReference type="HAMAP-Rule" id="MF_00118"/>
    </source>
</evidence>
<name>EFTU_STRR6</name>
<feature type="chain" id="PRO_0000091408" description="Elongation factor Tu">
    <location>
        <begin position="1"/>
        <end position="398"/>
    </location>
</feature>
<feature type="domain" description="tr-type G">
    <location>
        <begin position="10"/>
        <end position="207"/>
    </location>
</feature>
<feature type="region of interest" description="G1" evidence="1">
    <location>
        <begin position="19"/>
        <end position="26"/>
    </location>
</feature>
<feature type="region of interest" description="G2" evidence="1">
    <location>
        <begin position="63"/>
        <end position="67"/>
    </location>
</feature>
<feature type="region of interest" description="G3" evidence="1">
    <location>
        <begin position="84"/>
        <end position="87"/>
    </location>
</feature>
<feature type="region of interest" description="G4" evidence="1">
    <location>
        <begin position="139"/>
        <end position="142"/>
    </location>
</feature>
<feature type="region of interest" description="G5" evidence="1">
    <location>
        <begin position="177"/>
        <end position="179"/>
    </location>
</feature>
<feature type="binding site" evidence="2">
    <location>
        <begin position="19"/>
        <end position="26"/>
    </location>
    <ligand>
        <name>GTP</name>
        <dbReference type="ChEBI" id="CHEBI:37565"/>
    </ligand>
</feature>
<feature type="binding site" evidence="2">
    <location>
        <position position="26"/>
    </location>
    <ligand>
        <name>Mg(2+)</name>
        <dbReference type="ChEBI" id="CHEBI:18420"/>
    </ligand>
</feature>
<feature type="binding site" evidence="2">
    <location>
        <begin position="84"/>
        <end position="88"/>
    </location>
    <ligand>
        <name>GTP</name>
        <dbReference type="ChEBI" id="CHEBI:37565"/>
    </ligand>
</feature>
<feature type="binding site" evidence="2">
    <location>
        <begin position="139"/>
        <end position="142"/>
    </location>
    <ligand>
        <name>GTP</name>
        <dbReference type="ChEBI" id="CHEBI:37565"/>
    </ligand>
</feature>
<organism>
    <name type="scientific">Streptococcus pneumoniae (strain ATCC BAA-255 / R6)</name>
    <dbReference type="NCBI Taxonomy" id="171101"/>
    <lineage>
        <taxon>Bacteria</taxon>
        <taxon>Bacillati</taxon>
        <taxon>Bacillota</taxon>
        <taxon>Bacilli</taxon>
        <taxon>Lactobacillales</taxon>
        <taxon>Streptococcaceae</taxon>
        <taxon>Streptococcus</taxon>
    </lineage>
</organism>
<gene>
    <name evidence="2" type="primary">tuf</name>
    <name type="synonym">tufA</name>
    <name type="ordered locus">spr1343</name>
</gene>
<protein>
    <recommendedName>
        <fullName evidence="2">Elongation factor Tu</fullName>
        <shortName evidence="2">EF-Tu</shortName>
        <ecNumber evidence="2">3.6.5.3</ecNumber>
    </recommendedName>
</protein>
<reference key="1">
    <citation type="journal article" date="2001" name="J. Bacteriol.">
        <title>Genome of the bacterium Streptococcus pneumoniae strain R6.</title>
        <authorList>
            <person name="Hoskins J."/>
            <person name="Alborn W.E. Jr."/>
            <person name="Arnold J."/>
            <person name="Blaszczak L.C."/>
            <person name="Burgett S."/>
            <person name="DeHoff B.S."/>
            <person name="Estrem S.T."/>
            <person name="Fritz L."/>
            <person name="Fu D.-J."/>
            <person name="Fuller W."/>
            <person name="Geringer C."/>
            <person name="Gilmour R."/>
            <person name="Glass J.S."/>
            <person name="Khoja H."/>
            <person name="Kraft A.R."/>
            <person name="Lagace R.E."/>
            <person name="LeBlanc D.J."/>
            <person name="Lee L.N."/>
            <person name="Lefkowitz E.J."/>
            <person name="Lu J."/>
            <person name="Matsushima P."/>
            <person name="McAhren S.M."/>
            <person name="McHenney M."/>
            <person name="McLeaster K."/>
            <person name="Mundy C.W."/>
            <person name="Nicas T.I."/>
            <person name="Norris F.H."/>
            <person name="O'Gara M."/>
            <person name="Peery R.B."/>
            <person name="Robertson G.T."/>
            <person name="Rockey P."/>
            <person name="Sun P.-M."/>
            <person name="Winkler M.E."/>
            <person name="Yang Y."/>
            <person name="Young-Bellido M."/>
            <person name="Zhao G."/>
            <person name="Zook C.A."/>
            <person name="Baltz R.H."/>
            <person name="Jaskunas S.R."/>
            <person name="Rosteck P.R. Jr."/>
            <person name="Skatrud P.L."/>
            <person name="Glass J.I."/>
        </authorList>
    </citation>
    <scope>NUCLEOTIDE SEQUENCE [LARGE SCALE GENOMIC DNA]</scope>
    <source>
        <strain>ATCC BAA-255 / R6</strain>
    </source>
</reference>
<keyword id="KW-0963">Cytoplasm</keyword>
<keyword id="KW-0251">Elongation factor</keyword>
<keyword id="KW-0342">GTP-binding</keyword>
<keyword id="KW-0378">Hydrolase</keyword>
<keyword id="KW-0460">Magnesium</keyword>
<keyword id="KW-0479">Metal-binding</keyword>
<keyword id="KW-0547">Nucleotide-binding</keyword>
<keyword id="KW-0648">Protein biosynthesis</keyword>
<keyword id="KW-1185">Reference proteome</keyword>
<dbReference type="EC" id="3.6.5.3" evidence="2"/>
<dbReference type="EMBL" id="AE007317">
    <property type="protein sequence ID" value="AAL00147.1"/>
    <property type="molecule type" value="Genomic_DNA"/>
</dbReference>
<dbReference type="PIR" id="F98039">
    <property type="entry name" value="F98039"/>
</dbReference>
<dbReference type="RefSeq" id="NP_358936.1">
    <property type="nucleotide sequence ID" value="NC_003098.1"/>
</dbReference>
<dbReference type="RefSeq" id="WP_001040724.1">
    <property type="nucleotide sequence ID" value="NC_003098.1"/>
</dbReference>
<dbReference type="SMR" id="P64031"/>
<dbReference type="STRING" id="171101.spr1343"/>
<dbReference type="GeneID" id="45653269"/>
<dbReference type="KEGG" id="spr:spr1343"/>
<dbReference type="PATRIC" id="fig|171101.6.peg.1458"/>
<dbReference type="eggNOG" id="COG0050">
    <property type="taxonomic scope" value="Bacteria"/>
</dbReference>
<dbReference type="HOGENOM" id="CLU_007265_0_1_9"/>
<dbReference type="Proteomes" id="UP000000586">
    <property type="component" value="Chromosome"/>
</dbReference>
<dbReference type="GO" id="GO:0005737">
    <property type="term" value="C:cytoplasm"/>
    <property type="evidence" value="ECO:0007669"/>
    <property type="project" value="UniProtKB-SubCell"/>
</dbReference>
<dbReference type="GO" id="GO:0005525">
    <property type="term" value="F:GTP binding"/>
    <property type="evidence" value="ECO:0007669"/>
    <property type="project" value="UniProtKB-UniRule"/>
</dbReference>
<dbReference type="GO" id="GO:0003924">
    <property type="term" value="F:GTPase activity"/>
    <property type="evidence" value="ECO:0007669"/>
    <property type="project" value="InterPro"/>
</dbReference>
<dbReference type="GO" id="GO:0003746">
    <property type="term" value="F:translation elongation factor activity"/>
    <property type="evidence" value="ECO:0000318"/>
    <property type="project" value="GO_Central"/>
</dbReference>
<dbReference type="GO" id="GO:0006414">
    <property type="term" value="P:translational elongation"/>
    <property type="evidence" value="ECO:0000318"/>
    <property type="project" value="GO_Central"/>
</dbReference>
<dbReference type="CDD" id="cd01884">
    <property type="entry name" value="EF_Tu"/>
    <property type="match status" value="1"/>
</dbReference>
<dbReference type="CDD" id="cd03697">
    <property type="entry name" value="EFTU_II"/>
    <property type="match status" value="1"/>
</dbReference>
<dbReference type="CDD" id="cd03707">
    <property type="entry name" value="EFTU_III"/>
    <property type="match status" value="1"/>
</dbReference>
<dbReference type="FunFam" id="2.40.30.10:FF:000001">
    <property type="entry name" value="Elongation factor Tu"/>
    <property type="match status" value="1"/>
</dbReference>
<dbReference type="FunFam" id="3.40.50.300:FF:000003">
    <property type="entry name" value="Elongation factor Tu"/>
    <property type="match status" value="1"/>
</dbReference>
<dbReference type="Gene3D" id="3.40.50.300">
    <property type="entry name" value="P-loop containing nucleotide triphosphate hydrolases"/>
    <property type="match status" value="1"/>
</dbReference>
<dbReference type="Gene3D" id="2.40.30.10">
    <property type="entry name" value="Translation factors"/>
    <property type="match status" value="2"/>
</dbReference>
<dbReference type="HAMAP" id="MF_00118_B">
    <property type="entry name" value="EF_Tu_B"/>
    <property type="match status" value="1"/>
</dbReference>
<dbReference type="InterPro" id="IPR041709">
    <property type="entry name" value="EF-Tu_GTP-bd"/>
</dbReference>
<dbReference type="InterPro" id="IPR050055">
    <property type="entry name" value="EF-Tu_GTPase"/>
</dbReference>
<dbReference type="InterPro" id="IPR004161">
    <property type="entry name" value="EFTu-like_2"/>
</dbReference>
<dbReference type="InterPro" id="IPR033720">
    <property type="entry name" value="EFTU_2"/>
</dbReference>
<dbReference type="InterPro" id="IPR031157">
    <property type="entry name" value="G_TR_CS"/>
</dbReference>
<dbReference type="InterPro" id="IPR027417">
    <property type="entry name" value="P-loop_NTPase"/>
</dbReference>
<dbReference type="InterPro" id="IPR005225">
    <property type="entry name" value="Small_GTP-bd"/>
</dbReference>
<dbReference type="InterPro" id="IPR000795">
    <property type="entry name" value="T_Tr_GTP-bd_dom"/>
</dbReference>
<dbReference type="InterPro" id="IPR009000">
    <property type="entry name" value="Transl_B-barrel_sf"/>
</dbReference>
<dbReference type="InterPro" id="IPR009001">
    <property type="entry name" value="Transl_elong_EF1A/Init_IF2_C"/>
</dbReference>
<dbReference type="InterPro" id="IPR004541">
    <property type="entry name" value="Transl_elong_EFTu/EF1A_bac/org"/>
</dbReference>
<dbReference type="InterPro" id="IPR004160">
    <property type="entry name" value="Transl_elong_EFTu/EF1A_C"/>
</dbReference>
<dbReference type="NCBIfam" id="TIGR00485">
    <property type="entry name" value="EF-Tu"/>
    <property type="match status" value="1"/>
</dbReference>
<dbReference type="NCBIfam" id="NF000766">
    <property type="entry name" value="PRK00049.1"/>
    <property type="match status" value="1"/>
</dbReference>
<dbReference type="NCBIfam" id="NF009372">
    <property type="entry name" value="PRK12735.1"/>
    <property type="match status" value="1"/>
</dbReference>
<dbReference type="NCBIfam" id="NF009373">
    <property type="entry name" value="PRK12736.1"/>
    <property type="match status" value="1"/>
</dbReference>
<dbReference type="NCBIfam" id="TIGR00231">
    <property type="entry name" value="small_GTP"/>
    <property type="match status" value="1"/>
</dbReference>
<dbReference type="PANTHER" id="PTHR43721:SF22">
    <property type="entry name" value="ELONGATION FACTOR TU, MITOCHONDRIAL"/>
    <property type="match status" value="1"/>
</dbReference>
<dbReference type="PANTHER" id="PTHR43721">
    <property type="entry name" value="ELONGATION FACTOR TU-RELATED"/>
    <property type="match status" value="1"/>
</dbReference>
<dbReference type="Pfam" id="PF00009">
    <property type="entry name" value="GTP_EFTU"/>
    <property type="match status" value="1"/>
</dbReference>
<dbReference type="Pfam" id="PF03144">
    <property type="entry name" value="GTP_EFTU_D2"/>
    <property type="match status" value="1"/>
</dbReference>
<dbReference type="Pfam" id="PF03143">
    <property type="entry name" value="GTP_EFTU_D3"/>
    <property type="match status" value="1"/>
</dbReference>
<dbReference type="PRINTS" id="PR00315">
    <property type="entry name" value="ELONGATNFCT"/>
</dbReference>
<dbReference type="SUPFAM" id="SSF50465">
    <property type="entry name" value="EF-Tu/eEF-1alpha/eIF2-gamma C-terminal domain"/>
    <property type="match status" value="1"/>
</dbReference>
<dbReference type="SUPFAM" id="SSF52540">
    <property type="entry name" value="P-loop containing nucleoside triphosphate hydrolases"/>
    <property type="match status" value="1"/>
</dbReference>
<dbReference type="SUPFAM" id="SSF50447">
    <property type="entry name" value="Translation proteins"/>
    <property type="match status" value="1"/>
</dbReference>
<dbReference type="PROSITE" id="PS00301">
    <property type="entry name" value="G_TR_1"/>
    <property type="match status" value="1"/>
</dbReference>
<dbReference type="PROSITE" id="PS51722">
    <property type="entry name" value="G_TR_2"/>
    <property type="match status" value="1"/>
</dbReference>
<sequence>MAKEKYDRSKPHVNIGTIGHVDHGKTTLTAAITTVLARRLPSSVNQPKDYASIDAAPEERERGITINTAHVEYETEKRHYAHIDAPGHADYVKNMITGAAQMDGAILVVASTDGPMPQTREHILLSRQVGVKHLIVFMNKVDLVDDEELLELVEMEIRDLLSEYDFPGDDLPVIQGSALKALEGDSKYEDIVMELMNTVDEYIPEPERDTDKPLLLPVEDVFSITGRGTVASGRIDRGIVKVNDEIEIVGIKEETQKAVVTGVEMFRKQLDEGLAGDNVGVLLRGVQRDEIERGQVIAKPGSINPHTKFKGEVYILTKEEGGRHTPFFNNYRPQFYFRTTDVTGSIELPAGTEMVMPGDNVTIDVELIHPIAVEQGTTFSIREGGRTVGSGMVTEIEA</sequence>
<accession>P64031</accession>
<accession>Q97PV3</accession>